<comment type="function">
    <text evidence="1 5 6 8">May be involved in intracellular vesicle traffic (By similarity). Inhibits ATF4-mediated transcription, possibly by dimerizing with ATF4 to form inactive dimers that cannot bind DNA. May be involved in regulating bone mass density through an ATF4-dependent pathway. May be involved in cell cycle progression.</text>
</comment>
<comment type="subunit">
    <text evidence="1 5">Binds to the C-terminal coiled coil region of syntaxin family members STX1A, STX3A and STX4A (By similarity). Forms a heterodimer with ATF4 in osteoblasts.</text>
</comment>
<comment type="interaction">
    <interactant intactId="EBI-6116854">
        <id>Q8BHN1</id>
    </interactant>
    <interactant intactId="EBI-356402">
        <id>Q9UHD2</id>
        <label>TBK1</label>
    </interactant>
    <organismsDiffer>true</organismsDiffer>
    <experiments>2</experiments>
</comment>
<comment type="subcellular location">
    <subcellularLocation>
        <location evidence="8">Nucleus membrane</location>
    </subcellularLocation>
    <subcellularLocation>
        <location evidence="8">Cytoplasm</location>
        <location evidence="8">Cytosol</location>
    </subcellularLocation>
</comment>
<comment type="alternative products">
    <event type="alternative splicing"/>
    <isoform>
        <id>Q8BHN1-1</id>
        <name>1</name>
        <name>LrgW</name>
        <sequence type="displayed"/>
    </isoform>
    <isoform>
        <id>Q8BHN1-2</id>
        <name>2</name>
        <sequence type="described" ref="VSP_011835 VSP_011836 VSP_011837"/>
    </isoform>
    <isoform>
        <id>Q8BHN1-3</id>
        <name>3</name>
        <name>LrgS</name>
        <sequence type="described" ref="VSP_011835"/>
    </isoform>
</comment>
<comment type="developmental stage">
    <text evidence="7">At 16.5 dpc, expressed in osteoblasts surrounding newly formed trabecular bone. At postnatal day 2, detected in most osteoblasts and lining cells, and also strongly expressed in osteocytes. By postnatal week 4, strongly expressed in osteocytes (at protein level).</text>
</comment>
<comment type="induction">
    <text evidence="8">By LPS.</text>
</comment>
<comment type="similarity">
    <text evidence="12">Belongs to the taxilin family.</text>
</comment>
<comment type="sequence caution" evidence="12">
    <conflict type="erroneous termination">
        <sequence resource="EMBL-CDS" id="ABC47035"/>
    </conflict>
    <text>Truncated C-terminus.</text>
</comment>
<comment type="sequence caution" evidence="12">
    <conflict type="frameshift">
        <sequence resource="EMBL-CDS" id="ABC47035"/>
    </conflict>
</comment>
<comment type="sequence caution" evidence="12">
    <conflict type="erroneous termination">
        <sequence resource="EMBL-CDS" id="ABC60327"/>
    </conflict>
    <text>Truncated C-terminus.</text>
</comment>
<comment type="sequence caution" evidence="12">
    <conflict type="frameshift">
        <sequence resource="EMBL-CDS" id="ABC60327"/>
    </conflict>
</comment>
<feature type="chain" id="PRO_0000189427" description="Gamma-taxilin">
    <location>
        <begin position="1"/>
        <end position="524"/>
    </location>
</feature>
<feature type="region of interest" description="Disordered" evidence="4">
    <location>
        <begin position="1"/>
        <end position="37"/>
    </location>
</feature>
<feature type="region of interest" description="Disordered" evidence="4">
    <location>
        <begin position="64"/>
        <end position="86"/>
    </location>
</feature>
<feature type="region of interest" description="Disordered" evidence="4">
    <location>
        <begin position="106"/>
        <end position="130"/>
    </location>
</feature>
<feature type="region of interest" description="Disordered" evidence="4">
    <location>
        <begin position="501"/>
        <end position="524"/>
    </location>
</feature>
<feature type="coiled-coil region" evidence="3">
    <location>
        <begin position="153"/>
        <end position="465"/>
    </location>
</feature>
<feature type="compositionally biased region" description="Basic and acidic residues" evidence="4">
    <location>
        <begin position="1"/>
        <end position="10"/>
    </location>
</feature>
<feature type="compositionally biased region" description="Basic and acidic residues" evidence="4">
    <location>
        <begin position="106"/>
        <end position="115"/>
    </location>
</feature>
<feature type="modified residue" description="Omega-N-methylarginine" evidence="2">
    <location>
        <position position="12"/>
    </location>
</feature>
<feature type="modified residue" description="Omega-N-methylarginine" evidence="2">
    <location>
        <position position="24"/>
    </location>
</feature>
<feature type="modified residue" description="Phosphoserine" evidence="13 14">
    <location>
        <position position="79"/>
    </location>
</feature>
<feature type="modified residue" description="Phosphoserine" evidence="2">
    <location>
        <position position="86"/>
    </location>
</feature>
<feature type="modified residue" description="Phosphoserine" evidence="2">
    <location>
        <position position="97"/>
    </location>
</feature>
<feature type="modified residue" description="Phosphotyrosine" evidence="2">
    <location>
        <position position="283"/>
    </location>
</feature>
<feature type="modified residue" description="Phosphoserine" evidence="2">
    <location>
        <position position="512"/>
    </location>
</feature>
<feature type="splice variant" id="VSP_011835" description="In isoform 2 and isoform 3." evidence="9 10 11">
    <location>
        <begin position="55"/>
        <end position="103"/>
    </location>
</feature>
<feature type="splice variant" id="VSP_011836" description="In isoform 2." evidence="10">
    <original>HI</original>
    <variation>VI</variation>
    <location>
        <begin position="289"/>
        <end position="290"/>
    </location>
</feature>
<feature type="splice variant" id="VSP_011837" description="In isoform 2." evidence="10">
    <location>
        <begin position="291"/>
        <end position="524"/>
    </location>
</feature>
<feature type="sequence conflict" description="In Ref. 1; ABC47035." evidence="12" ref="1">
    <original>G</original>
    <variation>D</variation>
    <location>
        <position position="72"/>
    </location>
</feature>
<feature type="sequence conflict" description="In Ref. 1; ABC47035." evidence="12" ref="1">
    <original>E</original>
    <variation>D</variation>
    <location>
        <position position="84"/>
    </location>
</feature>
<feature type="sequence conflict" description="In Ref. 1; ABC47035/ABC60327." evidence="12" ref="1">
    <original>A</original>
    <variation>G</variation>
    <location>
        <position position="306"/>
    </location>
</feature>
<feature type="sequence conflict" description="In Ref. 1; ABC60327." evidence="12" ref="1">
    <original>N</original>
    <variation>T</variation>
    <location>
        <position position="446"/>
    </location>
</feature>
<feature type="sequence conflict" description="In Ref. 1; ABC47035." evidence="12" ref="1">
    <original>L</original>
    <variation>W</variation>
    <location>
        <position position="494"/>
    </location>
</feature>
<feature type="sequence conflict" description="In Ref. 1; ABC60327." evidence="12" ref="1">
    <original>G</original>
    <variation>S</variation>
    <location>
        <position position="514"/>
    </location>
</feature>
<proteinExistence type="evidence at protein level"/>
<keyword id="KW-0025">Alternative splicing</keyword>
<keyword id="KW-0131">Cell cycle</keyword>
<keyword id="KW-0175">Coiled coil</keyword>
<keyword id="KW-0963">Cytoplasm</keyword>
<keyword id="KW-0472">Membrane</keyword>
<keyword id="KW-0488">Methylation</keyword>
<keyword id="KW-0539">Nucleus</keyword>
<keyword id="KW-0597">Phosphoprotein</keyword>
<keyword id="KW-1185">Reference proteome</keyword>
<keyword id="KW-0804">Transcription</keyword>
<keyword id="KW-0805">Transcription regulation</keyword>
<evidence type="ECO:0000250" key="1"/>
<evidence type="ECO:0000250" key="2">
    <source>
        <dbReference type="UniProtKB" id="Q9NUQ3"/>
    </source>
</evidence>
<evidence type="ECO:0000255" key="3"/>
<evidence type="ECO:0000256" key="4">
    <source>
        <dbReference type="SAM" id="MobiDB-lite"/>
    </source>
</evidence>
<evidence type="ECO:0000269" key="5">
    <source>
    </source>
</evidence>
<evidence type="ECO:0000269" key="6">
    <source>
    </source>
</evidence>
<evidence type="ECO:0000269" key="7">
    <source>
    </source>
</evidence>
<evidence type="ECO:0000269" key="8">
    <source>
    </source>
</evidence>
<evidence type="ECO:0000303" key="9">
    <source>
    </source>
</evidence>
<evidence type="ECO:0000303" key="10">
    <source>
    </source>
</evidence>
<evidence type="ECO:0000303" key="11">
    <source>
    </source>
</evidence>
<evidence type="ECO:0000305" key="12"/>
<evidence type="ECO:0007744" key="13">
    <source>
    </source>
</evidence>
<evidence type="ECO:0007744" key="14">
    <source>
    </source>
</evidence>
<name>TXLNG_MOUSE</name>
<accession>Q8BHN1</accession>
<accession>A2AFJ5</accession>
<accession>Q148Z8</accession>
<accession>Q2LGB1</accession>
<accession>Q2PMX1</accession>
<accession>Q8BP11</accession>
<protein>
    <recommendedName>
        <fullName>Gamma-taxilin</fullName>
    </recommendedName>
    <alternativeName>
        <fullName>Factor inhibiting ATF4-mediated transcription</fullName>
        <shortName>FIAT</shortName>
    </alternativeName>
    <alternativeName>
        <fullName>Lipopolysaccharide-responsive gene protein</fullName>
    </alternativeName>
</protein>
<gene>
    <name type="primary">Txlng</name>
    <name type="synonym">Lrg</name>
</gene>
<sequence>MATRLEEVTRGRGGGTEEASEGGRGGRRRSPPQKFEIGTMEEARICGLGVKADMVCNSQANDILQHQDPSCGGTTKKHSLEGDEGSDFITKNRNLVSSVFCTQEKREEIPGREARTGPPDGQQDSECSRNKEKTLGKEVLLLMQALNTLSTPEEKLAALCKKYADLLEESRNVQKQMKILQKKQAQIVKEKVHLQSEHSKAILARSKLESLCRELQRHNKTLKEENMQQAREEEERRKEATAHFQITLNEIQAQLEQHDIHNAKLRQENIELGEKLKKLIEQYALREEHIDKVFKHKELQQQLVDAKLQQTTQLIKEADEKHQREREFLLKEATESRHKYEQMKQQEVQLKQQLSLYMDKFEEFQTTMAKSNELFTTFRQEMEKMTKKIKKLEKETIIWRTKWENNNKALLQMAEEKTVRDKEYKAFQIKLERLEKLCRALQTERNELNEKVEVLKEQVSIKAADGDLVSPATQPCAVLDSFKETSRRTLGMHLEARAKSVCEKSAAQKPSSSGSPAQGIESVD</sequence>
<reference key="1">
    <citation type="journal article" date="2010" name="Biochem. Biophys. Res. Commun.">
        <title>Molecular cloning and functional characterization of a mouse gene upregulated by lipopolysaccharide treatment reveals alternative splicing.</title>
        <authorList>
            <person name="Du K."/>
            <person name="Chen Y."/>
            <person name="Dai Z."/>
            <person name="Bi Y."/>
            <person name="Cai T."/>
            <person name="Hou L."/>
            <person name="Chai Y."/>
            <person name="Song Q."/>
            <person name="Chen S."/>
            <person name="Luo W."/>
            <person name="Chen J."/>
        </authorList>
    </citation>
    <scope>NUCLEOTIDE SEQUENCE [MRNA] (ISOFORM 3)</scope>
    <scope>NUCLEOTIDE SEQUENCE [MRNA] OF 1-523 (ISOFORM 1)</scope>
    <scope>FUNCTION</scope>
    <scope>SUBCELLULAR LOCATION</scope>
    <scope>ALTERNATIVE SPLICING</scope>
    <scope>INDUCTION</scope>
</reference>
<reference key="2">
    <citation type="journal article" date="2005" name="Science">
        <title>The transcriptional landscape of the mammalian genome.</title>
        <authorList>
            <person name="Carninci P."/>
            <person name="Kasukawa T."/>
            <person name="Katayama S."/>
            <person name="Gough J."/>
            <person name="Frith M.C."/>
            <person name="Maeda N."/>
            <person name="Oyama R."/>
            <person name="Ravasi T."/>
            <person name="Lenhard B."/>
            <person name="Wells C."/>
            <person name="Kodzius R."/>
            <person name="Shimokawa K."/>
            <person name="Bajic V.B."/>
            <person name="Brenner S.E."/>
            <person name="Batalov S."/>
            <person name="Forrest A.R."/>
            <person name="Zavolan M."/>
            <person name="Davis M.J."/>
            <person name="Wilming L.G."/>
            <person name="Aidinis V."/>
            <person name="Allen J.E."/>
            <person name="Ambesi-Impiombato A."/>
            <person name="Apweiler R."/>
            <person name="Aturaliya R.N."/>
            <person name="Bailey T.L."/>
            <person name="Bansal M."/>
            <person name="Baxter L."/>
            <person name="Beisel K.W."/>
            <person name="Bersano T."/>
            <person name="Bono H."/>
            <person name="Chalk A.M."/>
            <person name="Chiu K.P."/>
            <person name="Choudhary V."/>
            <person name="Christoffels A."/>
            <person name="Clutterbuck D.R."/>
            <person name="Crowe M.L."/>
            <person name="Dalla E."/>
            <person name="Dalrymple B.P."/>
            <person name="de Bono B."/>
            <person name="Della Gatta G."/>
            <person name="di Bernardo D."/>
            <person name="Down T."/>
            <person name="Engstrom P."/>
            <person name="Fagiolini M."/>
            <person name="Faulkner G."/>
            <person name="Fletcher C.F."/>
            <person name="Fukushima T."/>
            <person name="Furuno M."/>
            <person name="Futaki S."/>
            <person name="Gariboldi M."/>
            <person name="Georgii-Hemming P."/>
            <person name="Gingeras T.R."/>
            <person name="Gojobori T."/>
            <person name="Green R.E."/>
            <person name="Gustincich S."/>
            <person name="Harbers M."/>
            <person name="Hayashi Y."/>
            <person name="Hensch T.K."/>
            <person name="Hirokawa N."/>
            <person name="Hill D."/>
            <person name="Huminiecki L."/>
            <person name="Iacono M."/>
            <person name="Ikeo K."/>
            <person name="Iwama A."/>
            <person name="Ishikawa T."/>
            <person name="Jakt M."/>
            <person name="Kanapin A."/>
            <person name="Katoh M."/>
            <person name="Kawasawa Y."/>
            <person name="Kelso J."/>
            <person name="Kitamura H."/>
            <person name="Kitano H."/>
            <person name="Kollias G."/>
            <person name="Krishnan S.P."/>
            <person name="Kruger A."/>
            <person name="Kummerfeld S.K."/>
            <person name="Kurochkin I.V."/>
            <person name="Lareau L.F."/>
            <person name="Lazarevic D."/>
            <person name="Lipovich L."/>
            <person name="Liu J."/>
            <person name="Liuni S."/>
            <person name="McWilliam S."/>
            <person name="Madan Babu M."/>
            <person name="Madera M."/>
            <person name="Marchionni L."/>
            <person name="Matsuda H."/>
            <person name="Matsuzawa S."/>
            <person name="Miki H."/>
            <person name="Mignone F."/>
            <person name="Miyake S."/>
            <person name="Morris K."/>
            <person name="Mottagui-Tabar S."/>
            <person name="Mulder N."/>
            <person name="Nakano N."/>
            <person name="Nakauchi H."/>
            <person name="Ng P."/>
            <person name="Nilsson R."/>
            <person name="Nishiguchi S."/>
            <person name="Nishikawa S."/>
            <person name="Nori F."/>
            <person name="Ohara O."/>
            <person name="Okazaki Y."/>
            <person name="Orlando V."/>
            <person name="Pang K.C."/>
            <person name="Pavan W.J."/>
            <person name="Pavesi G."/>
            <person name="Pesole G."/>
            <person name="Petrovsky N."/>
            <person name="Piazza S."/>
            <person name="Reed J."/>
            <person name="Reid J.F."/>
            <person name="Ring B.Z."/>
            <person name="Ringwald M."/>
            <person name="Rost B."/>
            <person name="Ruan Y."/>
            <person name="Salzberg S.L."/>
            <person name="Sandelin A."/>
            <person name="Schneider C."/>
            <person name="Schoenbach C."/>
            <person name="Sekiguchi K."/>
            <person name="Semple C.A."/>
            <person name="Seno S."/>
            <person name="Sessa L."/>
            <person name="Sheng Y."/>
            <person name="Shibata Y."/>
            <person name="Shimada H."/>
            <person name="Shimada K."/>
            <person name="Silva D."/>
            <person name="Sinclair B."/>
            <person name="Sperling S."/>
            <person name="Stupka E."/>
            <person name="Sugiura K."/>
            <person name="Sultana R."/>
            <person name="Takenaka Y."/>
            <person name="Taki K."/>
            <person name="Tammoja K."/>
            <person name="Tan S.L."/>
            <person name="Tang S."/>
            <person name="Taylor M.S."/>
            <person name="Tegner J."/>
            <person name="Teichmann S.A."/>
            <person name="Ueda H.R."/>
            <person name="van Nimwegen E."/>
            <person name="Verardo R."/>
            <person name="Wei C.L."/>
            <person name="Yagi K."/>
            <person name="Yamanishi H."/>
            <person name="Zabarovsky E."/>
            <person name="Zhu S."/>
            <person name="Zimmer A."/>
            <person name="Hide W."/>
            <person name="Bult C."/>
            <person name="Grimmond S.M."/>
            <person name="Teasdale R.D."/>
            <person name="Liu E.T."/>
            <person name="Brusic V."/>
            <person name="Quackenbush J."/>
            <person name="Wahlestedt C."/>
            <person name="Mattick J.S."/>
            <person name="Hume D.A."/>
            <person name="Kai C."/>
            <person name="Sasaki D."/>
            <person name="Tomaru Y."/>
            <person name="Fukuda S."/>
            <person name="Kanamori-Katayama M."/>
            <person name="Suzuki M."/>
            <person name="Aoki J."/>
            <person name="Arakawa T."/>
            <person name="Iida J."/>
            <person name="Imamura K."/>
            <person name="Itoh M."/>
            <person name="Kato T."/>
            <person name="Kawaji H."/>
            <person name="Kawagashira N."/>
            <person name="Kawashima T."/>
            <person name="Kojima M."/>
            <person name="Kondo S."/>
            <person name="Konno H."/>
            <person name="Nakano K."/>
            <person name="Ninomiya N."/>
            <person name="Nishio T."/>
            <person name="Okada M."/>
            <person name="Plessy C."/>
            <person name="Shibata K."/>
            <person name="Shiraki T."/>
            <person name="Suzuki S."/>
            <person name="Tagami M."/>
            <person name="Waki K."/>
            <person name="Watahiki A."/>
            <person name="Okamura-Oho Y."/>
            <person name="Suzuki H."/>
            <person name="Kawai J."/>
            <person name="Hayashizaki Y."/>
        </authorList>
    </citation>
    <scope>NUCLEOTIDE SEQUENCE [LARGE SCALE MRNA] (ISOFORMS 1 AND 2)</scope>
    <source>
        <strain>C57BL/6J</strain>
        <tissue>Brain cortex</tissue>
        <tissue>Head</tissue>
        <tissue>Testis</tissue>
    </source>
</reference>
<reference key="3">
    <citation type="journal article" date="2009" name="PLoS Biol.">
        <title>Lineage-specific biology revealed by a finished genome assembly of the mouse.</title>
        <authorList>
            <person name="Church D.M."/>
            <person name="Goodstadt L."/>
            <person name="Hillier L.W."/>
            <person name="Zody M.C."/>
            <person name="Goldstein S."/>
            <person name="She X."/>
            <person name="Bult C.J."/>
            <person name="Agarwala R."/>
            <person name="Cherry J.L."/>
            <person name="DiCuccio M."/>
            <person name="Hlavina W."/>
            <person name="Kapustin Y."/>
            <person name="Meric P."/>
            <person name="Maglott D."/>
            <person name="Birtle Z."/>
            <person name="Marques A.C."/>
            <person name="Graves T."/>
            <person name="Zhou S."/>
            <person name="Teague B."/>
            <person name="Potamousis K."/>
            <person name="Churas C."/>
            <person name="Place M."/>
            <person name="Herschleb J."/>
            <person name="Runnheim R."/>
            <person name="Forrest D."/>
            <person name="Amos-Landgraf J."/>
            <person name="Schwartz D.C."/>
            <person name="Cheng Z."/>
            <person name="Lindblad-Toh K."/>
            <person name="Eichler E.E."/>
            <person name="Ponting C.P."/>
        </authorList>
    </citation>
    <scope>NUCLEOTIDE SEQUENCE [LARGE SCALE GENOMIC DNA]</scope>
    <source>
        <strain>C57BL/6J</strain>
    </source>
</reference>
<reference key="4">
    <citation type="journal article" date="2004" name="Genome Res.">
        <title>The status, quality, and expansion of the NIH full-length cDNA project: the Mammalian Gene Collection (MGC).</title>
        <authorList>
            <consortium name="The MGC Project Team"/>
        </authorList>
    </citation>
    <scope>NUCLEOTIDE SEQUENCE [LARGE SCALE MRNA] (ISOFORM 3)</scope>
</reference>
<reference key="5">
    <citation type="journal article" date="2005" name="J. Cell Biol.">
        <title>FIAT represses ATF4-mediated transcription to regulate bone mass in transgenic mice.</title>
        <authorList>
            <person name="Yu V.W."/>
            <person name="Ambartsoumian G."/>
            <person name="Verlinden L."/>
            <person name="Moir J.M."/>
            <person name="Prud'homme J."/>
            <person name="Gauthier C."/>
            <person name="Roughley P.J."/>
            <person name="St-Arnaud R."/>
        </authorList>
    </citation>
    <scope>FUNCTION</scope>
    <scope>SUBUNIT</scope>
</reference>
<reference key="6">
    <citation type="journal article" date="2007" name="Proc. Natl. Acad. Sci. U.S.A.">
        <title>Large-scale phosphorylation analysis of mouse liver.</title>
        <authorList>
            <person name="Villen J."/>
            <person name="Beausoleil S.A."/>
            <person name="Gerber S.A."/>
            <person name="Gygi S.P."/>
        </authorList>
    </citation>
    <scope>PHOSPHORYLATION [LARGE SCALE ANALYSIS] AT SER-79</scope>
    <scope>IDENTIFICATION BY MASS SPECTROMETRY [LARGE SCALE ANALYSIS]</scope>
    <source>
        <tissue>Liver</tissue>
    </source>
</reference>
<reference key="7">
    <citation type="journal article" date="2009" name="Gene Expr. Patterns">
        <title>FIAT is co-expressed with its dimerization target ATF4 in early osteoblasts, but not in osteocytes.</title>
        <authorList>
            <person name="Yu V.W."/>
            <person name="Akhouayri O."/>
            <person name="St-Arnaud R."/>
        </authorList>
    </citation>
    <scope>DEVELOPMENTAL STAGE</scope>
    <scope>SUBCELLULAR LOCATION</scope>
</reference>
<reference key="8">
    <citation type="journal article" date="2009" name="J. Cell. Biochem.">
        <title>FIAT inhibition increases osteoblast activity by modulating Atf4-dependent functions.</title>
        <authorList>
            <person name="Yu V.W."/>
            <person name="El-Hoss J."/>
            <person name="St-Arnaud R."/>
        </authorList>
    </citation>
    <scope>FUNCTION</scope>
</reference>
<reference key="9">
    <citation type="journal article" date="2010" name="Cell">
        <title>A tissue-specific atlas of mouse protein phosphorylation and expression.</title>
        <authorList>
            <person name="Huttlin E.L."/>
            <person name="Jedrychowski M.P."/>
            <person name="Elias J.E."/>
            <person name="Goswami T."/>
            <person name="Rad R."/>
            <person name="Beausoleil S.A."/>
            <person name="Villen J."/>
            <person name="Haas W."/>
            <person name="Sowa M.E."/>
            <person name="Gygi S.P."/>
        </authorList>
    </citation>
    <scope>PHOSPHORYLATION [LARGE SCALE ANALYSIS] AT SER-79</scope>
    <scope>IDENTIFICATION BY MASS SPECTROMETRY [LARGE SCALE ANALYSIS]</scope>
    <source>
        <tissue>Brown adipose tissue</tissue>
        <tissue>Kidney</tissue>
        <tissue>Liver</tissue>
        <tissue>Lung</tissue>
        <tissue>Spleen</tissue>
    </source>
</reference>
<dbReference type="EMBL" id="DQ316984">
    <property type="protein sequence ID" value="ABC47035.1"/>
    <property type="status" value="ALT_SEQ"/>
    <property type="molecule type" value="mRNA"/>
</dbReference>
<dbReference type="EMBL" id="DQ320011">
    <property type="protein sequence ID" value="ABC60327.1"/>
    <property type="status" value="ALT_SEQ"/>
    <property type="molecule type" value="mRNA"/>
</dbReference>
<dbReference type="EMBL" id="AK030100">
    <property type="protein sequence ID" value="BAC26785.1"/>
    <property type="molecule type" value="mRNA"/>
</dbReference>
<dbReference type="EMBL" id="AK031783">
    <property type="protein sequence ID" value="BAC27547.1"/>
    <property type="molecule type" value="mRNA"/>
</dbReference>
<dbReference type="EMBL" id="AK044130">
    <property type="protein sequence ID" value="BAC31791.1"/>
    <property type="molecule type" value="mRNA"/>
</dbReference>
<dbReference type="EMBL" id="AK078477">
    <property type="protein sequence ID" value="BAC37296.1"/>
    <property type="molecule type" value="mRNA"/>
</dbReference>
<dbReference type="EMBL" id="AL672123">
    <property type="status" value="NOT_ANNOTATED_CDS"/>
    <property type="molecule type" value="Genomic_DNA"/>
</dbReference>
<dbReference type="EMBL" id="BC117898">
    <property type="protein sequence ID" value="AAI17899.1"/>
    <property type="molecule type" value="mRNA"/>
</dbReference>
<dbReference type="EMBL" id="BC117899">
    <property type="protein sequence ID" value="AAI17900.1"/>
    <property type="molecule type" value="mRNA"/>
</dbReference>
<dbReference type="CCDS" id="CCDS30510.1">
    <molecule id="Q8BHN1-1"/>
</dbReference>
<dbReference type="CCDS" id="CCDS72463.1">
    <molecule id="Q8BHN1-3"/>
</dbReference>
<dbReference type="CCDS" id="CCDS81194.1">
    <molecule id="Q8BHN1-2"/>
</dbReference>
<dbReference type="RefSeq" id="NP_001277705.1">
    <molecule id="Q8BHN1-3"/>
    <property type="nucleotide sequence ID" value="NM_001290776.1"/>
</dbReference>
<dbReference type="RefSeq" id="NP_001277706.1">
    <molecule id="Q8BHN1-2"/>
    <property type="nucleotide sequence ID" value="NM_001290777.1"/>
</dbReference>
<dbReference type="RefSeq" id="NP_849266.1">
    <molecule id="Q8BHN1-1"/>
    <property type="nucleotide sequence ID" value="NM_178935.5"/>
</dbReference>
<dbReference type="SMR" id="Q8BHN1"/>
<dbReference type="FunCoup" id="Q8BHN1">
    <property type="interactions" value="1525"/>
</dbReference>
<dbReference type="IntAct" id="Q8BHN1">
    <property type="interactions" value="3"/>
</dbReference>
<dbReference type="STRING" id="10090.ENSMUSP00000038615"/>
<dbReference type="iPTMnet" id="Q8BHN1"/>
<dbReference type="PhosphoSitePlus" id="Q8BHN1"/>
<dbReference type="jPOST" id="Q8BHN1"/>
<dbReference type="PaxDb" id="10090-ENSMUSP00000038615"/>
<dbReference type="PeptideAtlas" id="Q8BHN1"/>
<dbReference type="ProteomicsDB" id="298041">
    <molecule id="Q8BHN1-1"/>
</dbReference>
<dbReference type="ProteomicsDB" id="298042">
    <molecule id="Q8BHN1-2"/>
</dbReference>
<dbReference type="ProteomicsDB" id="298043">
    <molecule id="Q8BHN1-3"/>
</dbReference>
<dbReference type="Pumba" id="Q8BHN1"/>
<dbReference type="Antibodypedia" id="410">
    <property type="antibodies" value="87 antibodies from 16 providers"/>
</dbReference>
<dbReference type="DNASU" id="353170"/>
<dbReference type="Ensembl" id="ENSMUST00000041370.11">
    <molecule id="Q8BHN1-1"/>
    <property type="protein sequence ID" value="ENSMUSP00000038615.5"/>
    <property type="gene ID" value="ENSMUSG00000038344.15"/>
</dbReference>
<dbReference type="Ensembl" id="ENSMUST00000112315.2">
    <molecule id="Q8BHN1-2"/>
    <property type="protein sequence ID" value="ENSMUSP00000107934.2"/>
    <property type="gene ID" value="ENSMUSG00000038344.15"/>
</dbReference>
<dbReference type="Ensembl" id="ENSMUST00000112316.9">
    <molecule id="Q8BHN1-3"/>
    <property type="protein sequence ID" value="ENSMUSP00000107935.3"/>
    <property type="gene ID" value="ENSMUSG00000038344.15"/>
</dbReference>
<dbReference type="GeneID" id="353170"/>
<dbReference type="KEGG" id="mmu:353170"/>
<dbReference type="UCSC" id="uc009uuh.2">
    <molecule id="Q8BHN1-1"/>
    <property type="organism name" value="mouse"/>
</dbReference>
<dbReference type="UCSC" id="uc009uui.2">
    <molecule id="Q8BHN1-3"/>
    <property type="organism name" value="mouse"/>
</dbReference>
<dbReference type="AGR" id="MGI:3590652"/>
<dbReference type="CTD" id="55787"/>
<dbReference type="MGI" id="MGI:3590652">
    <property type="gene designation" value="Txlng"/>
</dbReference>
<dbReference type="VEuPathDB" id="HostDB:ENSMUSG00000038344"/>
<dbReference type="eggNOG" id="KOG1850">
    <property type="taxonomic scope" value="Eukaryota"/>
</dbReference>
<dbReference type="GeneTree" id="ENSGT00940000155463"/>
<dbReference type="HOGENOM" id="CLU_025501_4_1_1"/>
<dbReference type="InParanoid" id="Q8BHN1"/>
<dbReference type="OMA" id="PKELNTA"/>
<dbReference type="OrthoDB" id="425555at2759"/>
<dbReference type="PhylomeDB" id="Q8BHN1"/>
<dbReference type="TreeFam" id="TF318595"/>
<dbReference type="BioGRID-ORCS" id="353170">
    <property type="hits" value="3 hits in 75 CRISPR screens"/>
</dbReference>
<dbReference type="ChiTaRS" id="Txlng">
    <property type="organism name" value="mouse"/>
</dbReference>
<dbReference type="PRO" id="PR:Q8BHN1"/>
<dbReference type="Proteomes" id="UP000000589">
    <property type="component" value="Chromosome X"/>
</dbReference>
<dbReference type="RNAct" id="Q8BHN1">
    <property type="molecule type" value="protein"/>
</dbReference>
<dbReference type="Bgee" id="ENSMUSG00000038344">
    <property type="expression patterns" value="Expressed in animal zygote and 234 other cell types or tissues"/>
</dbReference>
<dbReference type="ExpressionAtlas" id="Q8BHN1">
    <property type="expression patterns" value="baseline and differential"/>
</dbReference>
<dbReference type="GO" id="GO:0005829">
    <property type="term" value="C:cytosol"/>
    <property type="evidence" value="ECO:0000314"/>
    <property type="project" value="UniProtKB"/>
</dbReference>
<dbReference type="GO" id="GO:0031965">
    <property type="term" value="C:nuclear membrane"/>
    <property type="evidence" value="ECO:0000314"/>
    <property type="project" value="UniProtKB"/>
</dbReference>
<dbReference type="GO" id="GO:0140297">
    <property type="term" value="F:DNA-binding transcription factor binding"/>
    <property type="evidence" value="ECO:0007669"/>
    <property type="project" value="Ensembl"/>
</dbReference>
<dbReference type="GO" id="GO:0019905">
    <property type="term" value="F:syntaxin binding"/>
    <property type="evidence" value="ECO:0007669"/>
    <property type="project" value="InterPro"/>
</dbReference>
<dbReference type="GO" id="GO:0030500">
    <property type="term" value="P:regulation of bone mineralization"/>
    <property type="evidence" value="ECO:0000315"/>
    <property type="project" value="UniProtKB"/>
</dbReference>
<dbReference type="GO" id="GO:0051726">
    <property type="term" value="P:regulation of cell cycle"/>
    <property type="evidence" value="ECO:0000314"/>
    <property type="project" value="UniProtKB"/>
</dbReference>
<dbReference type="GO" id="GO:0010564">
    <property type="term" value="P:regulation of cell cycle process"/>
    <property type="evidence" value="ECO:0007669"/>
    <property type="project" value="Ensembl"/>
</dbReference>
<dbReference type="InterPro" id="IPR026183">
    <property type="entry name" value="Taxilin_fam"/>
</dbReference>
<dbReference type="PANTHER" id="PTHR16127:SF14">
    <property type="entry name" value="GAMMA-TAXILIN"/>
    <property type="match status" value="1"/>
</dbReference>
<dbReference type="PANTHER" id="PTHR16127">
    <property type="entry name" value="TAXILIN"/>
    <property type="match status" value="1"/>
</dbReference>
<dbReference type="Pfam" id="PF09728">
    <property type="entry name" value="Taxilin"/>
    <property type="match status" value="1"/>
</dbReference>
<organism>
    <name type="scientific">Mus musculus</name>
    <name type="common">Mouse</name>
    <dbReference type="NCBI Taxonomy" id="10090"/>
    <lineage>
        <taxon>Eukaryota</taxon>
        <taxon>Metazoa</taxon>
        <taxon>Chordata</taxon>
        <taxon>Craniata</taxon>
        <taxon>Vertebrata</taxon>
        <taxon>Euteleostomi</taxon>
        <taxon>Mammalia</taxon>
        <taxon>Eutheria</taxon>
        <taxon>Euarchontoglires</taxon>
        <taxon>Glires</taxon>
        <taxon>Rodentia</taxon>
        <taxon>Myomorpha</taxon>
        <taxon>Muroidea</taxon>
        <taxon>Muridae</taxon>
        <taxon>Murinae</taxon>
        <taxon>Mus</taxon>
        <taxon>Mus</taxon>
    </lineage>
</organism>